<protein>
    <recommendedName>
        <fullName evidence="1">ATP synthase subunit a</fullName>
    </recommendedName>
    <alternativeName>
        <fullName evidence="1">ATP synthase F0 sector subunit a</fullName>
    </alternativeName>
    <alternativeName>
        <fullName evidence="1">F-ATPase subunit 6</fullName>
    </alternativeName>
</protein>
<evidence type="ECO:0000255" key="1">
    <source>
        <dbReference type="HAMAP-Rule" id="MF_01393"/>
    </source>
</evidence>
<sequence length="264" mass="29422">MAATGEALTPQGYIQHHLTNLSVGEGFWTWHIDSLFFSVGLGVLFLWIFRSVGKKATSGVPGKLQCFVEMIVEFVNNSVKESFHGRNALIAPLALTIFVWVFMMNFMDMIPVDWLPHAASLMGIPYLKAVPTTDVNITFSLAIGVFLLIIFYSIKVKGVSGFVKELTLQPFNHKAMIPVNLLLETVTLIAKPISLALRLFGNLYAGELIFILIALMYGTNLLLSTLGVTLQLGWLIFHILVITLQAFIFMMLTIVYLSMAHEDH</sequence>
<comment type="function">
    <text evidence="1">Key component of the proton channel; it plays a direct role in the translocation of protons across the membrane.</text>
</comment>
<comment type="subunit">
    <text evidence="1">F-type ATPases have 2 components, CF(1) - the catalytic core - and CF(0) - the membrane proton channel. CF(1) has five subunits: alpha(3), beta(3), gamma(1), delta(1), epsilon(1). CF(0) has three main subunits: a(1), b(2) and c(9-12). The alpha and beta chains form an alternating ring which encloses part of the gamma chain. CF(1) is attached to CF(0) by a central stalk formed by the gamma and epsilon chains, while a peripheral stalk is formed by the delta and b chains.</text>
</comment>
<comment type="subcellular location">
    <subcellularLocation>
        <location evidence="1">Cell inner membrane</location>
        <topology evidence="1">Multi-pass membrane protein</topology>
    </subcellularLocation>
</comment>
<comment type="similarity">
    <text evidence="1">Belongs to the ATPase A chain family.</text>
</comment>
<organism>
    <name type="scientific">Shewanella baltica (strain OS195)</name>
    <dbReference type="NCBI Taxonomy" id="399599"/>
    <lineage>
        <taxon>Bacteria</taxon>
        <taxon>Pseudomonadati</taxon>
        <taxon>Pseudomonadota</taxon>
        <taxon>Gammaproteobacteria</taxon>
        <taxon>Alteromonadales</taxon>
        <taxon>Shewanellaceae</taxon>
        <taxon>Shewanella</taxon>
    </lineage>
</organism>
<reference key="1">
    <citation type="submission" date="2007-11" db="EMBL/GenBank/DDBJ databases">
        <title>Complete sequence of chromosome of Shewanella baltica OS195.</title>
        <authorList>
            <consortium name="US DOE Joint Genome Institute"/>
            <person name="Copeland A."/>
            <person name="Lucas S."/>
            <person name="Lapidus A."/>
            <person name="Barry K."/>
            <person name="Glavina del Rio T."/>
            <person name="Dalin E."/>
            <person name="Tice H."/>
            <person name="Pitluck S."/>
            <person name="Chain P."/>
            <person name="Malfatti S."/>
            <person name="Shin M."/>
            <person name="Vergez L."/>
            <person name="Schmutz J."/>
            <person name="Larimer F."/>
            <person name="Land M."/>
            <person name="Hauser L."/>
            <person name="Kyrpides N."/>
            <person name="Kim E."/>
            <person name="Brettar I."/>
            <person name="Rodrigues J."/>
            <person name="Konstantinidis K."/>
            <person name="Klappenbach J."/>
            <person name="Hofle M."/>
            <person name="Tiedje J."/>
            <person name="Richardson P."/>
        </authorList>
    </citation>
    <scope>NUCLEOTIDE SEQUENCE [LARGE SCALE GENOMIC DNA]</scope>
    <source>
        <strain>OS195</strain>
    </source>
</reference>
<keyword id="KW-0066">ATP synthesis</keyword>
<keyword id="KW-0997">Cell inner membrane</keyword>
<keyword id="KW-1003">Cell membrane</keyword>
<keyword id="KW-0138">CF(0)</keyword>
<keyword id="KW-0375">Hydrogen ion transport</keyword>
<keyword id="KW-0406">Ion transport</keyword>
<keyword id="KW-0472">Membrane</keyword>
<keyword id="KW-0812">Transmembrane</keyword>
<keyword id="KW-1133">Transmembrane helix</keyword>
<keyword id="KW-0813">Transport</keyword>
<accession>A9KX12</accession>
<gene>
    <name evidence="1" type="primary">atpB</name>
    <name type="ordered locus">Sbal195_4513</name>
</gene>
<proteinExistence type="inferred from homology"/>
<dbReference type="EMBL" id="CP000891">
    <property type="protein sequence ID" value="ABX51670.1"/>
    <property type="molecule type" value="Genomic_DNA"/>
</dbReference>
<dbReference type="RefSeq" id="WP_006083839.1">
    <property type="nucleotide sequence ID" value="NC_009997.1"/>
</dbReference>
<dbReference type="SMR" id="A9KX12"/>
<dbReference type="GeneID" id="11774466"/>
<dbReference type="KEGG" id="sbn:Sbal195_4513"/>
<dbReference type="HOGENOM" id="CLU_041018_1_0_6"/>
<dbReference type="Proteomes" id="UP000000770">
    <property type="component" value="Chromosome"/>
</dbReference>
<dbReference type="GO" id="GO:0005886">
    <property type="term" value="C:plasma membrane"/>
    <property type="evidence" value="ECO:0007669"/>
    <property type="project" value="UniProtKB-SubCell"/>
</dbReference>
<dbReference type="GO" id="GO:0045259">
    <property type="term" value="C:proton-transporting ATP synthase complex"/>
    <property type="evidence" value="ECO:0007669"/>
    <property type="project" value="UniProtKB-KW"/>
</dbReference>
<dbReference type="GO" id="GO:0046933">
    <property type="term" value="F:proton-transporting ATP synthase activity, rotational mechanism"/>
    <property type="evidence" value="ECO:0007669"/>
    <property type="project" value="UniProtKB-UniRule"/>
</dbReference>
<dbReference type="GO" id="GO:0042777">
    <property type="term" value="P:proton motive force-driven plasma membrane ATP synthesis"/>
    <property type="evidence" value="ECO:0007669"/>
    <property type="project" value="TreeGrafter"/>
</dbReference>
<dbReference type="CDD" id="cd00310">
    <property type="entry name" value="ATP-synt_Fo_a_6"/>
    <property type="match status" value="1"/>
</dbReference>
<dbReference type="FunFam" id="1.20.120.220:FF:000002">
    <property type="entry name" value="ATP synthase subunit a"/>
    <property type="match status" value="1"/>
</dbReference>
<dbReference type="Gene3D" id="1.20.120.220">
    <property type="entry name" value="ATP synthase, F0 complex, subunit A"/>
    <property type="match status" value="1"/>
</dbReference>
<dbReference type="HAMAP" id="MF_01393">
    <property type="entry name" value="ATP_synth_a_bact"/>
    <property type="match status" value="1"/>
</dbReference>
<dbReference type="InterPro" id="IPR045082">
    <property type="entry name" value="ATP_syn_F0_a_bact/chloroplast"/>
</dbReference>
<dbReference type="InterPro" id="IPR000568">
    <property type="entry name" value="ATP_synth_F0_asu"/>
</dbReference>
<dbReference type="InterPro" id="IPR023011">
    <property type="entry name" value="ATP_synth_F0_asu_AS"/>
</dbReference>
<dbReference type="InterPro" id="IPR035908">
    <property type="entry name" value="F0_ATP_A_sf"/>
</dbReference>
<dbReference type="NCBIfam" id="TIGR01131">
    <property type="entry name" value="ATP_synt_6_or_A"/>
    <property type="match status" value="1"/>
</dbReference>
<dbReference type="NCBIfam" id="NF004477">
    <property type="entry name" value="PRK05815.1-1"/>
    <property type="match status" value="1"/>
</dbReference>
<dbReference type="PANTHER" id="PTHR42823">
    <property type="entry name" value="ATP SYNTHASE SUBUNIT A, CHLOROPLASTIC"/>
    <property type="match status" value="1"/>
</dbReference>
<dbReference type="PANTHER" id="PTHR42823:SF3">
    <property type="entry name" value="ATP SYNTHASE SUBUNIT A, CHLOROPLASTIC"/>
    <property type="match status" value="1"/>
</dbReference>
<dbReference type="Pfam" id="PF00119">
    <property type="entry name" value="ATP-synt_A"/>
    <property type="match status" value="1"/>
</dbReference>
<dbReference type="PRINTS" id="PR00123">
    <property type="entry name" value="ATPASEA"/>
</dbReference>
<dbReference type="SUPFAM" id="SSF81336">
    <property type="entry name" value="F1F0 ATP synthase subunit A"/>
    <property type="match status" value="1"/>
</dbReference>
<dbReference type="PROSITE" id="PS00449">
    <property type="entry name" value="ATPASE_A"/>
    <property type="match status" value="1"/>
</dbReference>
<name>ATP6_SHEB9</name>
<feature type="chain" id="PRO_0000362450" description="ATP synthase subunit a">
    <location>
        <begin position="1"/>
        <end position="264"/>
    </location>
</feature>
<feature type="transmembrane region" description="Helical" evidence="1">
    <location>
        <begin position="29"/>
        <end position="49"/>
    </location>
</feature>
<feature type="transmembrane region" description="Helical" evidence="1">
    <location>
        <begin position="90"/>
        <end position="110"/>
    </location>
</feature>
<feature type="transmembrane region" description="Helical" evidence="1">
    <location>
        <begin position="134"/>
        <end position="154"/>
    </location>
</feature>
<feature type="transmembrane region" description="Helical" evidence="1">
    <location>
        <begin position="177"/>
        <end position="197"/>
    </location>
</feature>
<feature type="transmembrane region" description="Helical" evidence="1">
    <location>
        <begin position="208"/>
        <end position="228"/>
    </location>
</feature>
<feature type="transmembrane region" description="Helical" evidence="1">
    <location>
        <begin position="235"/>
        <end position="255"/>
    </location>
</feature>